<keyword id="KW-0002">3D-structure</keyword>
<keyword id="KW-0025">Alternative splicing</keyword>
<keyword id="KW-0067">ATP-binding</keyword>
<keyword id="KW-0131">Cell cycle</keyword>
<keyword id="KW-0158">Chromosome</keyword>
<keyword id="KW-0238">DNA-binding</keyword>
<keyword id="KW-0469">Meiosis</keyword>
<keyword id="KW-0547">Nucleotide-binding</keyword>
<keyword id="KW-0539">Nucleus</keyword>
<keyword id="KW-1267">Proteomics identification</keyword>
<keyword id="KW-1185">Reference proteome</keyword>
<dbReference type="EMBL" id="D63882">
    <property type="protein sequence ID" value="BAA09932.1"/>
    <property type="molecule type" value="mRNA"/>
</dbReference>
<dbReference type="EMBL" id="D64108">
    <property type="protein sequence ID" value="BAA10970.1"/>
    <property type="molecule type" value="mRNA"/>
</dbReference>
<dbReference type="EMBL" id="CR456486">
    <property type="protein sequence ID" value="CAG30372.1"/>
    <property type="molecule type" value="mRNA"/>
</dbReference>
<dbReference type="EMBL" id="AK292617">
    <property type="protein sequence ID" value="BAF85306.1"/>
    <property type="molecule type" value="mRNA"/>
</dbReference>
<dbReference type="EMBL" id="AK297664">
    <property type="protein sequence ID" value="BAG60028.1"/>
    <property type="molecule type" value="mRNA"/>
</dbReference>
<dbReference type="EMBL" id="AY520538">
    <property type="protein sequence ID" value="AAR89915.1"/>
    <property type="molecule type" value="Genomic_DNA"/>
</dbReference>
<dbReference type="EMBL" id="AL022320">
    <property type="status" value="NOT_ANNOTATED_CDS"/>
    <property type="molecule type" value="Genomic_DNA"/>
</dbReference>
<dbReference type="EMBL" id="BC125163">
    <property type="protein sequence ID" value="AAI25164.1"/>
    <property type="molecule type" value="mRNA"/>
</dbReference>
<dbReference type="EMBL" id="BC125164">
    <property type="protein sequence ID" value="AAI25165.1"/>
    <property type="molecule type" value="mRNA"/>
</dbReference>
<dbReference type="CCDS" id="CCDS13973.1">
    <molecule id="Q14565-1"/>
</dbReference>
<dbReference type="CCDS" id="CCDS63477.1">
    <molecule id="Q14565-2"/>
</dbReference>
<dbReference type="PIR" id="S62354">
    <property type="entry name" value="S62354"/>
</dbReference>
<dbReference type="RefSeq" id="NP_001265137.1">
    <molecule id="Q14565-2"/>
    <property type="nucleotide sequence ID" value="NM_001278208.2"/>
</dbReference>
<dbReference type="RefSeq" id="NP_001349946.1">
    <molecule id="Q14565-2"/>
    <property type="nucleotide sequence ID" value="NM_001363017.2"/>
</dbReference>
<dbReference type="RefSeq" id="NP_008999.2">
    <molecule id="Q14565-1"/>
    <property type="nucleotide sequence ID" value="NM_007068.3"/>
</dbReference>
<dbReference type="RefSeq" id="XP_006724175.1">
    <property type="nucleotide sequence ID" value="XM_006724112.2"/>
</dbReference>
<dbReference type="RefSeq" id="XP_047297032.1">
    <molecule id="Q14565-1"/>
    <property type="nucleotide sequence ID" value="XM_047441076.1"/>
</dbReference>
<dbReference type="RefSeq" id="XP_047297033.1">
    <molecule id="Q14565-1"/>
    <property type="nucleotide sequence ID" value="XM_047441077.1"/>
</dbReference>
<dbReference type="RefSeq" id="XP_047297034.1">
    <molecule id="Q14565-1"/>
    <property type="nucleotide sequence ID" value="XM_047441078.1"/>
</dbReference>
<dbReference type="RefSeq" id="XP_047297036.1">
    <molecule id="Q14565-2"/>
    <property type="nucleotide sequence ID" value="XM_047441080.1"/>
</dbReference>
<dbReference type="RefSeq" id="XP_047297037.1">
    <molecule id="Q14565-2"/>
    <property type="nucleotide sequence ID" value="XM_047441081.1"/>
</dbReference>
<dbReference type="RefSeq" id="XP_047297038.1">
    <molecule id="Q14565-2"/>
    <property type="nucleotide sequence ID" value="XM_047441082.1"/>
</dbReference>
<dbReference type="RefSeq" id="XP_054180974.1">
    <molecule id="Q14565-1"/>
    <property type="nucleotide sequence ID" value="XM_054324999.1"/>
</dbReference>
<dbReference type="RefSeq" id="XP_054180975.1">
    <molecule id="Q14565-1"/>
    <property type="nucleotide sequence ID" value="XM_054325000.1"/>
</dbReference>
<dbReference type="RefSeq" id="XP_054180976.1">
    <molecule id="Q14565-1"/>
    <property type="nucleotide sequence ID" value="XM_054325001.1"/>
</dbReference>
<dbReference type="RefSeq" id="XP_054180980.1">
    <molecule id="Q14565-2"/>
    <property type="nucleotide sequence ID" value="XM_054325005.1"/>
</dbReference>
<dbReference type="RefSeq" id="XP_054180981.1">
    <molecule id="Q14565-2"/>
    <property type="nucleotide sequence ID" value="XM_054325006.1"/>
</dbReference>
<dbReference type="RefSeq" id="XP_054180982.1">
    <molecule id="Q14565-2"/>
    <property type="nucleotide sequence ID" value="XM_054325007.1"/>
</dbReference>
<dbReference type="PDB" id="1V5W">
    <property type="method" value="X-ray"/>
    <property type="resolution" value="3.20 A"/>
    <property type="chains" value="A/B=1-340"/>
</dbReference>
<dbReference type="PDB" id="2ZJB">
    <property type="method" value="X-ray"/>
    <property type="resolution" value="3.50 A"/>
    <property type="chains" value="A/B=1-340"/>
</dbReference>
<dbReference type="PDB" id="4HYY">
    <property type="method" value="X-ray"/>
    <property type="resolution" value="2.60 A"/>
    <property type="chains" value="A/B/C/D=84-340"/>
</dbReference>
<dbReference type="PDB" id="6R3P">
    <property type="method" value="X-ray"/>
    <property type="resolution" value="2.05 A"/>
    <property type="chains" value="A/B/C/D=83-340"/>
</dbReference>
<dbReference type="PDB" id="7C98">
    <property type="method" value="EM"/>
    <property type="resolution" value="3.47 A"/>
    <property type="chains" value="A/B/C=1-340"/>
</dbReference>
<dbReference type="PDB" id="7C99">
    <property type="method" value="EM"/>
    <property type="resolution" value="3.36 A"/>
    <property type="chains" value="A/B/C=1-340"/>
</dbReference>
<dbReference type="PDB" id="7C9C">
    <property type="method" value="EM"/>
    <property type="resolution" value="3.33 A"/>
    <property type="chains" value="A/B/C=1-340"/>
</dbReference>
<dbReference type="PDB" id="7CGY">
    <property type="method" value="EM"/>
    <property type="resolution" value="3.20 A"/>
    <property type="chains" value="A/B/C=1-340"/>
</dbReference>
<dbReference type="PDB" id="8QQE">
    <property type="method" value="X-ray"/>
    <property type="resolution" value="3.46 A"/>
    <property type="chains" value="A/B=2-340"/>
</dbReference>
<dbReference type="PDB" id="8R2G">
    <property type="method" value="X-ray"/>
    <property type="resolution" value="3.45 A"/>
    <property type="chains" value="A/B/C/D/E/F/G/H=83-340"/>
</dbReference>
<dbReference type="PDBsum" id="1V5W"/>
<dbReference type="PDBsum" id="2ZJB"/>
<dbReference type="PDBsum" id="4HYY"/>
<dbReference type="PDBsum" id="6R3P"/>
<dbReference type="PDBsum" id="7C98"/>
<dbReference type="PDBsum" id="7C99"/>
<dbReference type="PDBsum" id="7C9C"/>
<dbReference type="PDBsum" id="7CGY"/>
<dbReference type="PDBsum" id="8QQE"/>
<dbReference type="PDBsum" id="8R2G"/>
<dbReference type="EMDB" id="EMD-30308"/>
<dbReference type="EMDB" id="EMD-30309"/>
<dbReference type="EMDB" id="EMD-30311"/>
<dbReference type="EMDB" id="EMD-30366"/>
<dbReference type="SMR" id="Q14565"/>
<dbReference type="BioGRID" id="116316">
    <property type="interactions" value="30"/>
</dbReference>
<dbReference type="DIP" id="DIP-24192N"/>
<dbReference type="FunCoup" id="Q14565">
    <property type="interactions" value="346"/>
</dbReference>
<dbReference type="IntAct" id="Q14565">
    <property type="interactions" value="24"/>
</dbReference>
<dbReference type="MINT" id="Q14565"/>
<dbReference type="STRING" id="9606.ENSP00000216024"/>
<dbReference type="DrugBank" id="DB03366">
    <property type="generic name" value="Imidazole"/>
</dbReference>
<dbReference type="iPTMnet" id="Q14565"/>
<dbReference type="PhosphoSitePlus" id="Q14565"/>
<dbReference type="BioMuta" id="DMC1"/>
<dbReference type="DMDM" id="13878923"/>
<dbReference type="jPOST" id="Q14565"/>
<dbReference type="MassIVE" id="Q14565"/>
<dbReference type="PaxDb" id="9606-ENSP00000216024"/>
<dbReference type="PeptideAtlas" id="Q14565"/>
<dbReference type="ProteomicsDB" id="60046">
    <molecule id="Q14565-1"/>
</dbReference>
<dbReference type="Antibodypedia" id="246">
    <property type="antibodies" value="418 antibodies from 34 providers"/>
</dbReference>
<dbReference type="DNASU" id="11144"/>
<dbReference type="Ensembl" id="ENST00000216024.7">
    <molecule id="Q14565-1"/>
    <property type="protein sequence ID" value="ENSP00000216024.2"/>
    <property type="gene ID" value="ENSG00000100206.11"/>
</dbReference>
<dbReference type="Ensembl" id="ENST00000428462.6">
    <molecule id="Q14565-2"/>
    <property type="protein sequence ID" value="ENSP00000412703.2"/>
    <property type="gene ID" value="ENSG00000100206.11"/>
</dbReference>
<dbReference type="GeneID" id="11144"/>
<dbReference type="KEGG" id="hsa:11144"/>
<dbReference type="MANE-Select" id="ENST00000216024.7">
    <property type="protein sequence ID" value="ENSP00000216024.2"/>
    <property type="RefSeq nucleotide sequence ID" value="NM_007068.4"/>
    <property type="RefSeq protein sequence ID" value="NP_008999.2"/>
</dbReference>
<dbReference type="UCSC" id="uc003avz.3">
    <molecule id="Q14565-1"/>
    <property type="organism name" value="human"/>
</dbReference>
<dbReference type="AGR" id="HGNC:2927"/>
<dbReference type="CTD" id="11144"/>
<dbReference type="DisGeNET" id="11144"/>
<dbReference type="GeneCards" id="DMC1"/>
<dbReference type="HGNC" id="HGNC:2927">
    <property type="gene designation" value="DMC1"/>
</dbReference>
<dbReference type="HPA" id="ENSG00000100206">
    <property type="expression patterns" value="Tissue enhanced (testis)"/>
</dbReference>
<dbReference type="MalaCards" id="DMC1"/>
<dbReference type="MIM" id="602721">
    <property type="type" value="gene"/>
</dbReference>
<dbReference type="neXtProt" id="NX_Q14565"/>
<dbReference type="OpenTargets" id="ENSG00000100206"/>
<dbReference type="PharmGKB" id="PA27377"/>
<dbReference type="VEuPathDB" id="HostDB:ENSG00000100206"/>
<dbReference type="eggNOG" id="KOG1434">
    <property type="taxonomic scope" value="Eukaryota"/>
</dbReference>
<dbReference type="GeneTree" id="ENSGT00760000119398"/>
<dbReference type="HOGENOM" id="CLU_041732_0_0_1"/>
<dbReference type="InParanoid" id="Q14565"/>
<dbReference type="OMA" id="ANPMKPV"/>
<dbReference type="OrthoDB" id="10251254at2759"/>
<dbReference type="PAN-GO" id="Q14565">
    <property type="GO annotations" value="10 GO annotations based on evolutionary models"/>
</dbReference>
<dbReference type="PhylomeDB" id="Q14565"/>
<dbReference type="TreeFam" id="TF300698"/>
<dbReference type="PathwayCommons" id="Q14565"/>
<dbReference type="Reactome" id="R-HSA-912446">
    <property type="pathway name" value="Meiotic recombination"/>
</dbReference>
<dbReference type="SignaLink" id="Q14565"/>
<dbReference type="SIGNOR" id="Q14565"/>
<dbReference type="BioGRID-ORCS" id="11144">
    <property type="hits" value="5 hits in 1159 CRISPR screens"/>
</dbReference>
<dbReference type="ChiTaRS" id="DMC1">
    <property type="organism name" value="human"/>
</dbReference>
<dbReference type="EvolutionaryTrace" id="Q14565"/>
<dbReference type="GeneWiki" id="DMC1_(gene)"/>
<dbReference type="GenomeRNAi" id="11144"/>
<dbReference type="Pharos" id="Q14565">
    <property type="development level" value="Tbio"/>
</dbReference>
<dbReference type="PRO" id="PR:Q14565"/>
<dbReference type="Proteomes" id="UP000005640">
    <property type="component" value="Chromosome 22"/>
</dbReference>
<dbReference type="RNAct" id="Q14565">
    <property type="molecule type" value="protein"/>
</dbReference>
<dbReference type="Bgee" id="ENSG00000100206">
    <property type="expression patterns" value="Expressed in buccal mucosa cell and 131 other cell types or tissues"/>
</dbReference>
<dbReference type="ExpressionAtlas" id="Q14565">
    <property type="expression patterns" value="baseline and differential"/>
</dbReference>
<dbReference type="GO" id="GO:0005694">
    <property type="term" value="C:chromosome"/>
    <property type="evidence" value="ECO:0000250"/>
    <property type="project" value="UniProtKB"/>
</dbReference>
<dbReference type="GO" id="GO:0000781">
    <property type="term" value="C:chromosome, telomeric region"/>
    <property type="evidence" value="ECO:0007669"/>
    <property type="project" value="Ensembl"/>
</dbReference>
<dbReference type="GO" id="GO:0000794">
    <property type="term" value="C:condensed nuclear chromosome"/>
    <property type="evidence" value="ECO:0000318"/>
    <property type="project" value="GO_Central"/>
</dbReference>
<dbReference type="GO" id="GO:0000800">
    <property type="term" value="C:lateral element"/>
    <property type="evidence" value="ECO:0007669"/>
    <property type="project" value="Ensembl"/>
</dbReference>
<dbReference type="GO" id="GO:0005654">
    <property type="term" value="C:nucleoplasm"/>
    <property type="evidence" value="ECO:0000304"/>
    <property type="project" value="Reactome"/>
</dbReference>
<dbReference type="GO" id="GO:0005634">
    <property type="term" value="C:nucleus"/>
    <property type="evidence" value="ECO:0000314"/>
    <property type="project" value="UniProtKB"/>
</dbReference>
<dbReference type="GO" id="GO:0035861">
    <property type="term" value="C:site of double-strand break"/>
    <property type="evidence" value="ECO:0007669"/>
    <property type="project" value="Ensembl"/>
</dbReference>
<dbReference type="GO" id="GO:0005524">
    <property type="term" value="F:ATP binding"/>
    <property type="evidence" value="ECO:0000304"/>
    <property type="project" value="ProtInc"/>
</dbReference>
<dbReference type="GO" id="GO:0016887">
    <property type="term" value="F:ATP hydrolysis activity"/>
    <property type="evidence" value="ECO:0007669"/>
    <property type="project" value="InterPro"/>
</dbReference>
<dbReference type="GO" id="GO:0008094">
    <property type="term" value="F:ATP-dependent activity, acting on DNA"/>
    <property type="evidence" value="ECO:0000314"/>
    <property type="project" value="UniProtKB"/>
</dbReference>
<dbReference type="GO" id="GO:0140664">
    <property type="term" value="F:ATP-dependent DNA damage sensor activity"/>
    <property type="evidence" value="ECO:0007669"/>
    <property type="project" value="InterPro"/>
</dbReference>
<dbReference type="GO" id="GO:0003677">
    <property type="term" value="F:DNA binding"/>
    <property type="evidence" value="ECO:0000304"/>
    <property type="project" value="ProtInc"/>
</dbReference>
<dbReference type="GO" id="GO:0000150">
    <property type="term" value="F:DNA strand exchange activity"/>
    <property type="evidence" value="ECO:0000318"/>
    <property type="project" value="GO_Central"/>
</dbReference>
<dbReference type="GO" id="GO:0003690">
    <property type="term" value="F:double-stranded DNA binding"/>
    <property type="evidence" value="ECO:0000318"/>
    <property type="project" value="GO_Central"/>
</dbReference>
<dbReference type="GO" id="GO:0042802">
    <property type="term" value="F:identical protein binding"/>
    <property type="evidence" value="ECO:0000353"/>
    <property type="project" value="IntAct"/>
</dbReference>
<dbReference type="GO" id="GO:0003697">
    <property type="term" value="F:single-stranded DNA binding"/>
    <property type="evidence" value="ECO:0000318"/>
    <property type="project" value="GO_Central"/>
</dbReference>
<dbReference type="GO" id="GO:0070192">
    <property type="term" value="P:chromosome organization involved in meiotic cell cycle"/>
    <property type="evidence" value="ECO:0000318"/>
    <property type="project" value="GO_Central"/>
</dbReference>
<dbReference type="GO" id="GO:0000730">
    <property type="term" value="P:DNA recombinase assembly"/>
    <property type="evidence" value="ECO:0000318"/>
    <property type="project" value="GO_Central"/>
</dbReference>
<dbReference type="GO" id="GO:0042148">
    <property type="term" value="P:DNA strand invasion"/>
    <property type="evidence" value="ECO:0000318"/>
    <property type="project" value="GO_Central"/>
</dbReference>
<dbReference type="GO" id="GO:1990918">
    <property type="term" value="P:double-strand break repair involved in meiotic recombination"/>
    <property type="evidence" value="ECO:0007669"/>
    <property type="project" value="Ensembl"/>
</dbReference>
<dbReference type="GO" id="GO:0007292">
    <property type="term" value="P:female gamete generation"/>
    <property type="evidence" value="ECO:0000304"/>
    <property type="project" value="ProtInc"/>
</dbReference>
<dbReference type="GO" id="GO:0007129">
    <property type="term" value="P:homologous chromosome pairing at meiosis"/>
    <property type="evidence" value="ECO:0007669"/>
    <property type="project" value="Ensembl"/>
</dbReference>
<dbReference type="GO" id="GO:0007141">
    <property type="term" value="P:male meiosis I"/>
    <property type="evidence" value="ECO:0007669"/>
    <property type="project" value="Ensembl"/>
</dbReference>
<dbReference type="GO" id="GO:0051321">
    <property type="term" value="P:meiotic cell cycle"/>
    <property type="evidence" value="ECO:0000304"/>
    <property type="project" value="ProtInc"/>
</dbReference>
<dbReference type="GO" id="GO:0006312">
    <property type="term" value="P:mitotic recombination"/>
    <property type="evidence" value="ECO:0000318"/>
    <property type="project" value="GO_Central"/>
</dbReference>
<dbReference type="GO" id="GO:0001556">
    <property type="term" value="P:oocyte maturation"/>
    <property type="evidence" value="ECO:0007669"/>
    <property type="project" value="Ensembl"/>
</dbReference>
<dbReference type="GO" id="GO:0001541">
    <property type="term" value="P:ovarian follicle development"/>
    <property type="evidence" value="ECO:0007669"/>
    <property type="project" value="Ensembl"/>
</dbReference>
<dbReference type="GO" id="GO:0007131">
    <property type="term" value="P:reciprocal meiotic recombination"/>
    <property type="evidence" value="ECO:0000314"/>
    <property type="project" value="UniProtKB"/>
</dbReference>
<dbReference type="GO" id="GO:0007286">
    <property type="term" value="P:spermatid development"/>
    <property type="evidence" value="ECO:0007669"/>
    <property type="project" value="Ensembl"/>
</dbReference>
<dbReference type="GO" id="GO:0007283">
    <property type="term" value="P:spermatogenesis"/>
    <property type="evidence" value="ECO:0000304"/>
    <property type="project" value="ProtInc"/>
</dbReference>
<dbReference type="CDD" id="cd19514">
    <property type="entry name" value="DMC1"/>
    <property type="match status" value="1"/>
</dbReference>
<dbReference type="DisProt" id="DP02746"/>
<dbReference type="FunFam" id="3.40.50.300:FF:000239">
    <property type="entry name" value="Meiotic recombination protein DMC1"/>
    <property type="match status" value="1"/>
</dbReference>
<dbReference type="FunFam" id="1.10.150.20:FF:000032">
    <property type="entry name" value="meiotic recombination protein DMC1/LIM15 homolog"/>
    <property type="match status" value="1"/>
</dbReference>
<dbReference type="Gene3D" id="1.10.150.20">
    <property type="entry name" value="5' to 3' exonuclease, C-terminal subdomain"/>
    <property type="match status" value="1"/>
</dbReference>
<dbReference type="Gene3D" id="3.40.50.300">
    <property type="entry name" value="P-loop containing nucleotide triphosphate hydrolases"/>
    <property type="match status" value="1"/>
</dbReference>
<dbReference type="IDEAL" id="IID00078"/>
<dbReference type="InterPro" id="IPR003593">
    <property type="entry name" value="AAA+_ATPase"/>
</dbReference>
<dbReference type="InterPro" id="IPR011940">
    <property type="entry name" value="Dmc1"/>
</dbReference>
<dbReference type="InterPro" id="IPR013632">
    <property type="entry name" value="DNA_recomb/repair_Rad51_C"/>
</dbReference>
<dbReference type="InterPro" id="IPR016467">
    <property type="entry name" value="DNA_recomb/repair_RecA-like"/>
</dbReference>
<dbReference type="InterPro" id="IPR010995">
    <property type="entry name" value="DNA_repair_Rad51/TF_NusA_a-hlx"/>
</dbReference>
<dbReference type="InterPro" id="IPR027417">
    <property type="entry name" value="P-loop_NTPase"/>
</dbReference>
<dbReference type="InterPro" id="IPR020588">
    <property type="entry name" value="RecA_ATP-bd"/>
</dbReference>
<dbReference type="InterPro" id="IPR020587">
    <property type="entry name" value="RecA_monomer-monomer_interface"/>
</dbReference>
<dbReference type="NCBIfam" id="NF003301">
    <property type="entry name" value="PRK04301.1"/>
    <property type="match status" value="1"/>
</dbReference>
<dbReference type="NCBIfam" id="TIGR02238">
    <property type="entry name" value="recomb_DMC1"/>
    <property type="match status" value="1"/>
</dbReference>
<dbReference type="PANTHER" id="PTHR22942:SF30">
    <property type="entry name" value="MEIOTIC RECOMBINATION PROTEIN DMC1_LIM15 HOMOLOG"/>
    <property type="match status" value="1"/>
</dbReference>
<dbReference type="PANTHER" id="PTHR22942">
    <property type="entry name" value="RECA/RAD51/RADA DNA STRAND-PAIRING FAMILY MEMBER"/>
    <property type="match status" value="1"/>
</dbReference>
<dbReference type="Pfam" id="PF14520">
    <property type="entry name" value="HHH_5"/>
    <property type="match status" value="1"/>
</dbReference>
<dbReference type="Pfam" id="PF08423">
    <property type="entry name" value="Rad51"/>
    <property type="match status" value="1"/>
</dbReference>
<dbReference type="PIRSF" id="PIRSF005856">
    <property type="entry name" value="Rad51"/>
    <property type="match status" value="1"/>
</dbReference>
<dbReference type="SMART" id="SM00382">
    <property type="entry name" value="AAA"/>
    <property type="match status" value="1"/>
</dbReference>
<dbReference type="SUPFAM" id="SSF52540">
    <property type="entry name" value="P-loop containing nucleoside triphosphate hydrolases"/>
    <property type="match status" value="1"/>
</dbReference>
<dbReference type="SUPFAM" id="SSF47794">
    <property type="entry name" value="Rad51 N-terminal domain-like"/>
    <property type="match status" value="1"/>
</dbReference>
<dbReference type="PROSITE" id="PS50162">
    <property type="entry name" value="RECA_2"/>
    <property type="match status" value="1"/>
</dbReference>
<dbReference type="PROSITE" id="PS50163">
    <property type="entry name" value="RECA_3"/>
    <property type="match status" value="1"/>
</dbReference>
<comment type="function">
    <text evidence="4">Participates in meiotic recombination, specifically in homologous strand assimilation, which is required for the resolution of meiotic double-strand breaks.</text>
</comment>
<comment type="subunit">
    <text evidence="1 2 3 4 5">Double stacked ring-shaped homooctamer (PubMed:15125839). Interacts with BRCA2 (PubMed:20729832). Interacts with the MND1-PSMC3IP heterodimer (By similarity). Interacts with RAD51AP1; the interaction is direct and stimulates DMC1-mediated homologous recombination (PubMed:21307306, PubMed:21903585).</text>
</comment>
<comment type="interaction">
    <interactant intactId="EBI-930865">
        <id>Q14565</id>
    </interactant>
    <interactant intactId="EBI-79792">
        <id>P51587</id>
        <label>BRCA2</label>
    </interactant>
    <organismsDiffer>false</organismsDiffer>
    <experiments>12</experiments>
</comment>
<comment type="interaction">
    <interactant intactId="EBI-930865">
        <id>Q14565</id>
    </interactant>
    <interactant intactId="EBI-930865">
        <id>Q14565</id>
        <label>DMC1</label>
    </interactant>
    <organismsDiffer>false</organismsDiffer>
    <experiments>3</experiments>
</comment>
<comment type="interaction">
    <interactant intactId="EBI-930865">
        <id>Q14565</id>
    </interactant>
    <interactant intactId="EBI-739467">
        <id>Q9H8Y8</id>
        <label>GORASP2</label>
    </interactant>
    <organismsDiffer>false</organismsDiffer>
    <experiments>8</experiments>
</comment>
<comment type="interaction">
    <interactant intactId="EBI-930865">
        <id>Q14565</id>
    </interactant>
    <interactant intactId="EBI-743960">
        <id>Q8N5Z5</id>
        <label>KCTD17</label>
    </interactant>
    <organismsDiffer>false</organismsDiffer>
    <experiments>4</experiments>
</comment>
<comment type="interaction">
    <interactant intactId="EBI-930865">
        <id>Q14565</id>
    </interactant>
    <interactant intactId="EBI-739832">
        <id>Q8TBB1</id>
        <label>LNX1</label>
    </interactant>
    <organismsDiffer>false</organismsDiffer>
    <experiments>3</experiments>
</comment>
<comment type="interaction">
    <interactant intactId="EBI-930865">
        <id>Q14565</id>
    </interactant>
    <interactant intactId="EBI-740897">
        <id>Q9GZT8</id>
        <label>NIF3L1</label>
    </interactant>
    <organismsDiffer>false</organismsDiffer>
    <experiments>9</experiments>
</comment>
<comment type="interaction">
    <interactant intactId="EBI-930865">
        <id>Q14565</id>
    </interactant>
    <interactant intactId="EBI-348567">
        <id>O75928-2</id>
        <label>PIAS2</label>
    </interactant>
    <organismsDiffer>false</organismsDiffer>
    <experiments>3</experiments>
</comment>
<comment type="interaction">
    <interactant intactId="EBI-930865">
        <id>Q14565</id>
    </interactant>
    <interactant intactId="EBI-79165">
        <id>Q9NRD5</id>
        <label>PICK1</label>
    </interactant>
    <organismsDiffer>false</organismsDiffer>
    <experiments>3</experiments>
</comment>
<comment type="interaction">
    <interactant intactId="EBI-930865">
        <id>Q14565</id>
    </interactant>
    <interactant intactId="EBI-348380">
        <id>P25788</id>
        <label>PSMA3</label>
    </interactant>
    <organismsDiffer>false</organismsDiffer>
    <experiments>7</experiments>
</comment>
<comment type="interaction">
    <interactant intactId="EBI-930865">
        <id>Q14565</id>
    </interactant>
    <interactant intactId="EBI-1178743">
        <id>Q96B01-2</id>
        <label>RAD51AP1</label>
    </interactant>
    <organismsDiffer>false</organismsDiffer>
    <experiments>3</experiments>
</comment>
<comment type="interaction">
    <interactant intactId="EBI-930865">
        <id>Q14565</id>
    </interactant>
    <interactant intactId="EBI-727004">
        <id>O00560</id>
        <label>SDCBP</label>
    </interactant>
    <organismsDiffer>false</organismsDiffer>
    <experiments>7</experiments>
</comment>
<comment type="interaction">
    <interactant intactId="EBI-930865">
        <id>Q14565</id>
    </interactant>
    <interactant intactId="EBI-742426">
        <id>Q9H190</id>
        <label>SDCBP2</label>
    </interactant>
    <organismsDiffer>false</organismsDiffer>
    <experiments>3</experiments>
</comment>
<comment type="interaction">
    <interactant intactId="EBI-930865">
        <id>Q14565</id>
    </interactant>
    <interactant intactId="EBI-740098">
        <id>P36406</id>
        <label>TRIM23</label>
    </interactant>
    <organismsDiffer>false</organismsDiffer>
    <experiments>3</experiments>
</comment>
<comment type="interaction">
    <interactant intactId="EBI-930865">
        <id>Q14565</id>
    </interactant>
    <interactant intactId="EBI-10180829">
        <id>Q7KZS0</id>
        <label>UBE2I</label>
    </interactant>
    <organismsDiffer>false</organismsDiffer>
    <experiments>3</experiments>
</comment>
<comment type="subcellular location">
    <subcellularLocation>
        <location evidence="6">Nucleus</location>
    </subcellularLocation>
    <subcellularLocation>
        <location evidence="1">Chromosome</location>
    </subcellularLocation>
</comment>
<comment type="alternative products">
    <event type="alternative splicing"/>
    <isoform>
        <id>Q14565-1</id>
        <name>1</name>
        <sequence type="displayed"/>
    </isoform>
    <isoform>
        <id>Q14565-2</id>
        <name>2</name>
        <sequence type="described" ref="VSP_055357"/>
    </isoform>
</comment>
<comment type="similarity">
    <text evidence="9">Belongs to the RecA family. DMC1 subfamily.</text>
</comment>
<protein>
    <recommendedName>
        <fullName>Meiotic recombination protein DMC1/LIM15 homolog</fullName>
    </recommendedName>
</protein>
<organism>
    <name type="scientific">Homo sapiens</name>
    <name type="common">Human</name>
    <dbReference type="NCBI Taxonomy" id="9606"/>
    <lineage>
        <taxon>Eukaryota</taxon>
        <taxon>Metazoa</taxon>
        <taxon>Chordata</taxon>
        <taxon>Craniata</taxon>
        <taxon>Vertebrata</taxon>
        <taxon>Euteleostomi</taxon>
        <taxon>Mammalia</taxon>
        <taxon>Eutheria</taxon>
        <taxon>Euarchontoglires</taxon>
        <taxon>Primates</taxon>
        <taxon>Haplorrhini</taxon>
        <taxon>Catarrhini</taxon>
        <taxon>Hominidae</taxon>
        <taxon>Homo</taxon>
    </lineage>
</organism>
<accession>Q14565</accession>
<accession>A8K9A2</accession>
<accession>B4DMW6</accession>
<accession>Q08AI1</accession>
<accession>Q99498</accession>
<accession>Q9UH11</accession>
<name>DMC1_HUMAN</name>
<evidence type="ECO:0000250" key="1">
    <source>
        <dbReference type="UniProtKB" id="Q61880"/>
    </source>
</evidence>
<evidence type="ECO:0000269" key="2">
    <source>
    </source>
</evidence>
<evidence type="ECO:0000269" key="3">
    <source>
    </source>
</evidence>
<evidence type="ECO:0000269" key="4">
    <source>
    </source>
</evidence>
<evidence type="ECO:0000269" key="5">
    <source>
    </source>
</evidence>
<evidence type="ECO:0000269" key="6">
    <source>
    </source>
</evidence>
<evidence type="ECO:0000269" key="7">
    <source ref="5"/>
</evidence>
<evidence type="ECO:0000303" key="8">
    <source>
    </source>
</evidence>
<evidence type="ECO:0000305" key="9"/>
<evidence type="ECO:0007829" key="10">
    <source>
        <dbReference type="PDB" id="1V5W"/>
    </source>
</evidence>
<evidence type="ECO:0007829" key="11">
    <source>
        <dbReference type="PDB" id="4HYY"/>
    </source>
</evidence>
<evidence type="ECO:0007829" key="12">
    <source>
        <dbReference type="PDB" id="6R3P"/>
    </source>
</evidence>
<evidence type="ECO:0007829" key="13">
    <source>
        <dbReference type="PDB" id="7C99"/>
    </source>
</evidence>
<evidence type="ECO:0007829" key="14">
    <source>
        <dbReference type="PDB" id="7C9C"/>
    </source>
</evidence>
<evidence type="ECO:0007829" key="15">
    <source>
        <dbReference type="PDB" id="7CGY"/>
    </source>
</evidence>
<gene>
    <name type="primary">DMC1</name>
    <name type="synonym">DMC1H</name>
    <name type="synonym">LIM15</name>
</gene>
<feature type="chain" id="PRO_0000122918" description="Meiotic recombination protein DMC1/LIM15 homolog">
    <location>
        <begin position="1"/>
        <end position="340"/>
    </location>
</feature>
<feature type="binding site" evidence="9">
    <location>
        <begin position="126"/>
        <end position="133"/>
    </location>
    <ligand>
        <name>ATP</name>
        <dbReference type="ChEBI" id="CHEBI:30616"/>
    </ligand>
</feature>
<feature type="binding site" evidence="2">
    <location>
        <position position="230"/>
    </location>
    <ligand>
        <name>dsDNA</name>
        <dbReference type="ChEBI" id="CHEBI:4705"/>
    </ligand>
</feature>
<feature type="binding site" evidence="2">
    <location>
        <position position="230"/>
    </location>
    <ligand>
        <name>ssDNA</name>
        <dbReference type="ChEBI" id="CHEBI:9160"/>
    </ligand>
</feature>
<feature type="binding site" evidence="2">
    <location>
        <position position="233"/>
    </location>
    <ligand>
        <name>ssDNA</name>
        <dbReference type="ChEBI" id="CHEBI:9160"/>
    </ligand>
</feature>
<feature type="binding site" evidence="2">
    <location>
        <position position="236"/>
    </location>
    <ligand>
        <name>dsDNA</name>
        <dbReference type="ChEBI" id="CHEBI:4705"/>
    </ligand>
</feature>
<feature type="binding site" evidence="2">
    <location>
        <position position="236"/>
    </location>
    <ligand>
        <name>ssDNA</name>
        <dbReference type="ChEBI" id="CHEBI:9160"/>
    </ligand>
</feature>
<feature type="binding site" evidence="2">
    <location>
        <position position="242"/>
    </location>
    <ligand>
        <name>dsDNA</name>
        <dbReference type="ChEBI" id="CHEBI:4705"/>
    </ligand>
</feature>
<feature type="binding site" evidence="2">
    <location>
        <position position="242"/>
    </location>
    <ligand>
        <name>ssDNA</name>
        <dbReference type="ChEBI" id="CHEBI:9160"/>
    </ligand>
</feature>
<feature type="binding site" evidence="2">
    <location>
        <position position="311"/>
    </location>
    <ligand>
        <name>ssDNA</name>
        <dbReference type="ChEBI" id="CHEBI:9160"/>
    </ligand>
</feature>
<feature type="splice variant" id="VSP_055357" description="In isoform 2." evidence="8">
    <original>VTAQLPGAGGYPGGKIIFIDTENTFRPDRLRDIADRFNVDHDAVLDNVLYARAYTS</original>
    <variation>G</variation>
    <location>
        <begin position="141"/>
        <end position="196"/>
    </location>
</feature>
<feature type="sequence variant" id="VAR_061757" description="In dbSNP:rs58396845.">
    <original>G</original>
    <variation>D</variation>
    <location>
        <position position="150"/>
    </location>
</feature>
<feature type="sequence variant" id="VAR_018960" description="In dbSNP:rs2227914." evidence="7">
    <original>M</original>
    <variation>V</variation>
    <location>
        <position position="200"/>
    </location>
</feature>
<feature type="mutagenesis site" description="Abolishes binding to ssDNA or dsDNA." evidence="2">
    <original>R</original>
    <variation>A</variation>
    <location>
        <position position="230"/>
    </location>
</feature>
<feature type="mutagenesis site" description="Abolishes binding to ssDNA." evidence="2">
    <original>F</original>
    <variation>A</variation>
    <location>
        <position position="233"/>
    </location>
</feature>
<feature type="mutagenesis site" description="Abolishes binding to ssDNA or dsDNA." evidence="2">
    <original>R</original>
    <variation>A</variation>
    <location>
        <position position="236"/>
    </location>
</feature>
<feature type="mutagenesis site" description="Abolishes binding to ssDNA or dsDNA." evidence="2">
    <original>R</original>
    <variation>A</variation>
    <location>
        <position position="242"/>
    </location>
</feature>
<feature type="mutagenesis site" description="Decreases octamer stability." evidence="2">
    <original>E</original>
    <variation>A</variation>
    <variation>Q</variation>
    <location>
        <position position="258"/>
    </location>
</feature>
<feature type="mutagenesis site" description="Abolishes binding to ssDNA." evidence="2">
    <original>R</original>
    <variation>A</variation>
    <location>
        <position position="311"/>
    </location>
</feature>
<feature type="sequence conflict" description="In Ref. 2; BAA10970." evidence="9" ref="2">
    <original>I</original>
    <variation>N</variation>
    <location>
        <position position="37"/>
    </location>
</feature>
<feature type="sequence conflict" description="In Ref. 1; BAA09932." evidence="9" ref="1">
    <original>A</original>
    <variation>P</variation>
    <location>
        <position position="183"/>
    </location>
</feature>
<feature type="turn" evidence="13">
    <location>
        <begin position="24"/>
        <end position="27"/>
    </location>
</feature>
<feature type="turn" evidence="15">
    <location>
        <begin position="28"/>
        <end position="31"/>
    </location>
</feature>
<feature type="helix" evidence="15">
    <location>
        <begin position="34"/>
        <end position="40"/>
    </location>
</feature>
<feature type="turn" evidence="15">
    <location>
        <begin position="41"/>
        <end position="44"/>
    </location>
</feature>
<feature type="strand" evidence="15">
    <location>
        <begin position="47"/>
        <end position="54"/>
    </location>
</feature>
<feature type="helix" evidence="15">
    <location>
        <begin position="56"/>
        <end position="59"/>
    </location>
</feature>
<feature type="helix" evidence="15">
    <location>
        <begin position="67"/>
        <end position="70"/>
    </location>
</feature>
<feature type="helix" evidence="15">
    <location>
        <begin position="72"/>
        <end position="77"/>
    </location>
</feature>
<feature type="turn" evidence="15">
    <location>
        <begin position="78"/>
        <end position="80"/>
    </location>
</feature>
<feature type="strand" evidence="10">
    <location>
        <begin position="85"/>
        <end position="87"/>
    </location>
</feature>
<feature type="helix" evidence="12">
    <location>
        <begin position="88"/>
        <end position="95"/>
    </location>
</feature>
<feature type="helix" evidence="12">
    <location>
        <begin position="106"/>
        <end position="112"/>
    </location>
</feature>
<feature type="strand" evidence="12">
    <location>
        <begin position="114"/>
        <end position="127"/>
    </location>
</feature>
<feature type="helix" evidence="12">
    <location>
        <begin position="132"/>
        <end position="142"/>
    </location>
</feature>
<feature type="helix" evidence="12">
    <location>
        <begin position="148"/>
        <end position="150"/>
    </location>
</feature>
<feature type="strand" evidence="12">
    <location>
        <begin position="155"/>
        <end position="163"/>
    </location>
</feature>
<feature type="helix" evidence="12">
    <location>
        <begin position="167"/>
        <end position="176"/>
    </location>
</feature>
<feature type="helix" evidence="12">
    <location>
        <begin position="181"/>
        <end position="186"/>
    </location>
</feature>
<feature type="strand" evidence="12">
    <location>
        <begin position="188"/>
        <end position="192"/>
    </location>
</feature>
<feature type="helix" evidence="12">
    <location>
        <begin position="196"/>
        <end position="212"/>
    </location>
</feature>
<feature type="strand" evidence="12">
    <location>
        <begin position="216"/>
        <end position="223"/>
    </location>
</feature>
<feature type="helix" evidence="12">
    <location>
        <begin position="227"/>
        <end position="232"/>
    </location>
</feature>
<feature type="helix" evidence="10">
    <location>
        <begin position="235"/>
        <end position="237"/>
    </location>
</feature>
<feature type="helix" evidence="12">
    <location>
        <begin position="239"/>
        <end position="259"/>
    </location>
</feature>
<feature type="strand" evidence="12">
    <location>
        <begin position="263"/>
        <end position="268"/>
    </location>
</feature>
<feature type="strand" evidence="14">
    <location>
        <begin position="270"/>
        <end position="272"/>
    </location>
</feature>
<feature type="strand" evidence="11">
    <location>
        <begin position="287"/>
        <end position="289"/>
    </location>
</feature>
<feature type="helix" evidence="12">
    <location>
        <begin position="290"/>
        <end position="296"/>
    </location>
</feature>
<feature type="strand" evidence="12">
    <location>
        <begin position="298"/>
        <end position="305"/>
    </location>
</feature>
<feature type="strand" evidence="12">
    <location>
        <begin position="310"/>
        <end position="315"/>
    </location>
</feature>
<feature type="strand" evidence="13">
    <location>
        <begin position="319"/>
        <end position="321"/>
    </location>
</feature>
<feature type="helix" evidence="12">
    <location>
        <begin position="322"/>
        <end position="324"/>
    </location>
</feature>
<feature type="strand" evidence="12">
    <location>
        <begin position="325"/>
        <end position="331"/>
    </location>
</feature>
<feature type="strand" evidence="12">
    <location>
        <begin position="334"/>
        <end position="336"/>
    </location>
</feature>
<reference key="1">
    <citation type="journal article" date="1995" name="DNA Res.">
        <title>Expression profiles of a human gene identified as a structural homologue of meiosis-specific recA-like genes.</title>
        <authorList>
            <person name="Sato S."/>
            <person name="Seki N."/>
            <person name="Hotta Y."/>
            <person name="Tabata S."/>
        </authorList>
    </citation>
    <scope>NUCLEOTIDE SEQUENCE [MRNA] (ISOFORM 1)</scope>
    <source>
        <tissue>Testis</tissue>
    </source>
</reference>
<reference key="2">
    <citation type="journal article" date="1996" name="Nucleic Acids Res.">
        <title>The mouse and human homologs of DMC1, the yeast meiosis-specific homologous recombination gene, have a common unique form of exon-skipped transcript in meiosis.</title>
        <authorList>
            <person name="Habu T."/>
            <person name="Taki T."/>
            <person name="West A."/>
            <person name="Nishimune Y."/>
            <person name="Morita T."/>
        </authorList>
    </citation>
    <scope>NUCLEOTIDE SEQUENCE [MRNA] (ISOFORM 1)</scope>
    <source>
        <tissue>Testis</tissue>
    </source>
</reference>
<reference key="3">
    <citation type="journal article" date="2004" name="Genome Biol.">
        <title>A genome annotation-driven approach to cloning the human ORFeome.</title>
        <authorList>
            <person name="Collins J.E."/>
            <person name="Wright C.L."/>
            <person name="Edwards C.A."/>
            <person name="Davis M.P."/>
            <person name="Grinham J.A."/>
            <person name="Cole C.G."/>
            <person name="Goward M.E."/>
            <person name="Aguado B."/>
            <person name="Mallya M."/>
            <person name="Mokrab Y."/>
            <person name="Huckle E.J."/>
            <person name="Beare D.M."/>
            <person name="Dunham I."/>
        </authorList>
    </citation>
    <scope>NUCLEOTIDE SEQUENCE [LARGE SCALE MRNA] (ISOFORM 1)</scope>
</reference>
<reference key="4">
    <citation type="journal article" date="2004" name="Nat. Genet.">
        <title>Complete sequencing and characterization of 21,243 full-length human cDNAs.</title>
        <authorList>
            <person name="Ota T."/>
            <person name="Suzuki Y."/>
            <person name="Nishikawa T."/>
            <person name="Otsuki T."/>
            <person name="Sugiyama T."/>
            <person name="Irie R."/>
            <person name="Wakamatsu A."/>
            <person name="Hayashi K."/>
            <person name="Sato H."/>
            <person name="Nagai K."/>
            <person name="Kimura K."/>
            <person name="Makita H."/>
            <person name="Sekine M."/>
            <person name="Obayashi M."/>
            <person name="Nishi T."/>
            <person name="Shibahara T."/>
            <person name="Tanaka T."/>
            <person name="Ishii S."/>
            <person name="Yamamoto J."/>
            <person name="Saito K."/>
            <person name="Kawai Y."/>
            <person name="Isono Y."/>
            <person name="Nakamura Y."/>
            <person name="Nagahari K."/>
            <person name="Murakami K."/>
            <person name="Yasuda T."/>
            <person name="Iwayanagi T."/>
            <person name="Wagatsuma M."/>
            <person name="Shiratori A."/>
            <person name="Sudo H."/>
            <person name="Hosoiri T."/>
            <person name="Kaku Y."/>
            <person name="Kodaira H."/>
            <person name="Kondo H."/>
            <person name="Sugawara M."/>
            <person name="Takahashi M."/>
            <person name="Kanda K."/>
            <person name="Yokoi T."/>
            <person name="Furuya T."/>
            <person name="Kikkawa E."/>
            <person name="Omura Y."/>
            <person name="Abe K."/>
            <person name="Kamihara K."/>
            <person name="Katsuta N."/>
            <person name="Sato K."/>
            <person name="Tanikawa M."/>
            <person name="Yamazaki M."/>
            <person name="Ninomiya K."/>
            <person name="Ishibashi T."/>
            <person name="Yamashita H."/>
            <person name="Murakawa K."/>
            <person name="Fujimori K."/>
            <person name="Tanai H."/>
            <person name="Kimata M."/>
            <person name="Watanabe M."/>
            <person name="Hiraoka S."/>
            <person name="Chiba Y."/>
            <person name="Ishida S."/>
            <person name="Ono Y."/>
            <person name="Takiguchi S."/>
            <person name="Watanabe S."/>
            <person name="Yosida M."/>
            <person name="Hotuta T."/>
            <person name="Kusano J."/>
            <person name="Kanehori K."/>
            <person name="Takahashi-Fujii A."/>
            <person name="Hara H."/>
            <person name="Tanase T.-O."/>
            <person name="Nomura Y."/>
            <person name="Togiya S."/>
            <person name="Komai F."/>
            <person name="Hara R."/>
            <person name="Takeuchi K."/>
            <person name="Arita M."/>
            <person name="Imose N."/>
            <person name="Musashino K."/>
            <person name="Yuuki H."/>
            <person name="Oshima A."/>
            <person name="Sasaki N."/>
            <person name="Aotsuka S."/>
            <person name="Yoshikawa Y."/>
            <person name="Matsunawa H."/>
            <person name="Ichihara T."/>
            <person name="Shiohata N."/>
            <person name="Sano S."/>
            <person name="Moriya S."/>
            <person name="Momiyama H."/>
            <person name="Satoh N."/>
            <person name="Takami S."/>
            <person name="Terashima Y."/>
            <person name="Suzuki O."/>
            <person name="Nakagawa S."/>
            <person name="Senoh A."/>
            <person name="Mizoguchi H."/>
            <person name="Goto Y."/>
            <person name="Shimizu F."/>
            <person name="Wakebe H."/>
            <person name="Hishigaki H."/>
            <person name="Watanabe T."/>
            <person name="Sugiyama A."/>
            <person name="Takemoto M."/>
            <person name="Kawakami B."/>
            <person name="Yamazaki M."/>
            <person name="Watanabe K."/>
            <person name="Kumagai A."/>
            <person name="Itakura S."/>
            <person name="Fukuzumi Y."/>
            <person name="Fujimori Y."/>
            <person name="Komiyama M."/>
            <person name="Tashiro H."/>
            <person name="Tanigami A."/>
            <person name="Fujiwara T."/>
            <person name="Ono T."/>
            <person name="Yamada K."/>
            <person name="Fujii Y."/>
            <person name="Ozaki K."/>
            <person name="Hirao M."/>
            <person name="Ohmori Y."/>
            <person name="Kawabata A."/>
            <person name="Hikiji T."/>
            <person name="Kobatake N."/>
            <person name="Inagaki H."/>
            <person name="Ikema Y."/>
            <person name="Okamoto S."/>
            <person name="Okitani R."/>
            <person name="Kawakami T."/>
            <person name="Noguchi S."/>
            <person name="Itoh T."/>
            <person name="Shigeta K."/>
            <person name="Senba T."/>
            <person name="Matsumura K."/>
            <person name="Nakajima Y."/>
            <person name="Mizuno T."/>
            <person name="Morinaga M."/>
            <person name="Sasaki M."/>
            <person name="Togashi T."/>
            <person name="Oyama M."/>
            <person name="Hata H."/>
            <person name="Watanabe M."/>
            <person name="Komatsu T."/>
            <person name="Mizushima-Sugano J."/>
            <person name="Satoh T."/>
            <person name="Shirai Y."/>
            <person name="Takahashi Y."/>
            <person name="Nakagawa K."/>
            <person name="Okumura K."/>
            <person name="Nagase T."/>
            <person name="Nomura N."/>
            <person name="Kikuchi H."/>
            <person name="Masuho Y."/>
            <person name="Yamashita R."/>
            <person name="Nakai K."/>
            <person name="Yada T."/>
            <person name="Nakamura Y."/>
            <person name="Ohara O."/>
            <person name="Isogai T."/>
            <person name="Sugano S."/>
        </authorList>
    </citation>
    <scope>NUCLEOTIDE SEQUENCE [LARGE SCALE MRNA] (ISOFORMS 1 AND 2)</scope>
    <source>
        <tissue>Heart</tissue>
        <tissue>Thymus</tissue>
    </source>
</reference>
<reference key="5">
    <citation type="submission" date="2004-01" db="EMBL/GenBank/DDBJ databases">
        <authorList>
            <consortium name="NIEHS SNPs program"/>
        </authorList>
    </citation>
    <scope>NUCLEOTIDE SEQUENCE [GENOMIC DNA]</scope>
    <scope>VARIANT VAL-200</scope>
</reference>
<reference key="6">
    <citation type="journal article" date="1999" name="Nature">
        <title>The DNA sequence of human chromosome 22.</title>
        <authorList>
            <person name="Dunham I."/>
            <person name="Hunt A.R."/>
            <person name="Collins J.E."/>
            <person name="Bruskiewich R."/>
            <person name="Beare D.M."/>
            <person name="Clamp M."/>
            <person name="Smink L.J."/>
            <person name="Ainscough R."/>
            <person name="Almeida J.P."/>
            <person name="Babbage A.K."/>
            <person name="Bagguley C."/>
            <person name="Bailey J."/>
            <person name="Barlow K.F."/>
            <person name="Bates K.N."/>
            <person name="Beasley O.P."/>
            <person name="Bird C.P."/>
            <person name="Blakey S.E."/>
            <person name="Bridgeman A.M."/>
            <person name="Buck D."/>
            <person name="Burgess J."/>
            <person name="Burrill W.D."/>
            <person name="Burton J."/>
            <person name="Carder C."/>
            <person name="Carter N.P."/>
            <person name="Chen Y."/>
            <person name="Clark G."/>
            <person name="Clegg S.M."/>
            <person name="Cobley V.E."/>
            <person name="Cole C.G."/>
            <person name="Collier R.E."/>
            <person name="Connor R."/>
            <person name="Conroy D."/>
            <person name="Corby N.R."/>
            <person name="Coville G.J."/>
            <person name="Cox A.V."/>
            <person name="Davis J."/>
            <person name="Dawson E."/>
            <person name="Dhami P.D."/>
            <person name="Dockree C."/>
            <person name="Dodsworth S.J."/>
            <person name="Durbin R.M."/>
            <person name="Ellington A.G."/>
            <person name="Evans K.L."/>
            <person name="Fey J.M."/>
            <person name="Fleming K."/>
            <person name="French L."/>
            <person name="Garner A.A."/>
            <person name="Gilbert J.G.R."/>
            <person name="Goward M.E."/>
            <person name="Grafham D.V."/>
            <person name="Griffiths M.N.D."/>
            <person name="Hall C."/>
            <person name="Hall R.E."/>
            <person name="Hall-Tamlyn G."/>
            <person name="Heathcott R.W."/>
            <person name="Ho S."/>
            <person name="Holmes S."/>
            <person name="Hunt S.E."/>
            <person name="Jones M.C."/>
            <person name="Kershaw J."/>
            <person name="Kimberley A.M."/>
            <person name="King A."/>
            <person name="Laird G.K."/>
            <person name="Langford C.F."/>
            <person name="Leversha M.A."/>
            <person name="Lloyd C."/>
            <person name="Lloyd D.M."/>
            <person name="Martyn I.D."/>
            <person name="Mashreghi-Mohammadi M."/>
            <person name="Matthews L.H."/>
            <person name="Mccann O.T."/>
            <person name="Mcclay J."/>
            <person name="Mclaren S."/>
            <person name="McMurray A.A."/>
            <person name="Milne S.A."/>
            <person name="Mortimore B.J."/>
            <person name="Odell C.N."/>
            <person name="Pavitt R."/>
            <person name="Pearce A.V."/>
            <person name="Pearson D."/>
            <person name="Phillimore B.J.C.T."/>
            <person name="Phillips S.H."/>
            <person name="Plumb R.W."/>
            <person name="Ramsay H."/>
            <person name="Ramsey Y."/>
            <person name="Rogers L."/>
            <person name="Ross M.T."/>
            <person name="Scott C.E."/>
            <person name="Sehra H.K."/>
            <person name="Skuce C.D."/>
            <person name="Smalley S."/>
            <person name="Smith M.L."/>
            <person name="Soderlund C."/>
            <person name="Spragon L."/>
            <person name="Steward C.A."/>
            <person name="Sulston J.E."/>
            <person name="Swann R.M."/>
            <person name="Vaudin M."/>
            <person name="Wall M."/>
            <person name="Wallis J.M."/>
            <person name="Whiteley M.N."/>
            <person name="Willey D.L."/>
            <person name="Williams L."/>
            <person name="Williams S.A."/>
            <person name="Williamson H."/>
            <person name="Wilmer T.E."/>
            <person name="Wilming L."/>
            <person name="Wright C.L."/>
            <person name="Hubbard T."/>
            <person name="Bentley D.R."/>
            <person name="Beck S."/>
            <person name="Rogers J."/>
            <person name="Shimizu N."/>
            <person name="Minoshima S."/>
            <person name="Kawasaki K."/>
            <person name="Sasaki T."/>
            <person name="Asakawa S."/>
            <person name="Kudoh J."/>
            <person name="Shintani A."/>
            <person name="Shibuya K."/>
            <person name="Yoshizaki Y."/>
            <person name="Aoki N."/>
            <person name="Mitsuyama S."/>
            <person name="Roe B.A."/>
            <person name="Chen F."/>
            <person name="Chu L."/>
            <person name="Crabtree J."/>
            <person name="Deschamps S."/>
            <person name="Do A."/>
            <person name="Do T."/>
            <person name="Dorman A."/>
            <person name="Fang F."/>
            <person name="Fu Y."/>
            <person name="Hu P."/>
            <person name="Hua A."/>
            <person name="Kenton S."/>
            <person name="Lai H."/>
            <person name="Lao H.I."/>
            <person name="Lewis J."/>
            <person name="Lewis S."/>
            <person name="Lin S.-P."/>
            <person name="Loh P."/>
            <person name="Malaj E."/>
            <person name="Nguyen T."/>
            <person name="Pan H."/>
            <person name="Phan S."/>
            <person name="Qi S."/>
            <person name="Qian Y."/>
            <person name="Ray L."/>
            <person name="Ren Q."/>
            <person name="Shaull S."/>
            <person name="Sloan D."/>
            <person name="Song L."/>
            <person name="Wang Q."/>
            <person name="Wang Y."/>
            <person name="Wang Z."/>
            <person name="White J."/>
            <person name="Willingham D."/>
            <person name="Wu H."/>
            <person name="Yao Z."/>
            <person name="Zhan M."/>
            <person name="Zhang G."/>
            <person name="Chissoe S."/>
            <person name="Murray J."/>
            <person name="Miller N."/>
            <person name="Minx P."/>
            <person name="Fulton R."/>
            <person name="Johnson D."/>
            <person name="Bemis G."/>
            <person name="Bentley D."/>
            <person name="Bradshaw H."/>
            <person name="Bourne S."/>
            <person name="Cordes M."/>
            <person name="Du Z."/>
            <person name="Fulton L."/>
            <person name="Goela D."/>
            <person name="Graves T."/>
            <person name="Hawkins J."/>
            <person name="Hinds K."/>
            <person name="Kemp K."/>
            <person name="Latreille P."/>
            <person name="Layman D."/>
            <person name="Ozersky P."/>
            <person name="Rohlfing T."/>
            <person name="Scheet P."/>
            <person name="Walker C."/>
            <person name="Wamsley A."/>
            <person name="Wohldmann P."/>
            <person name="Pepin K."/>
            <person name="Nelson J."/>
            <person name="Korf I."/>
            <person name="Bedell J.A."/>
            <person name="Hillier L.W."/>
            <person name="Mardis E."/>
            <person name="Waterston R."/>
            <person name="Wilson R."/>
            <person name="Emanuel B.S."/>
            <person name="Shaikh T."/>
            <person name="Kurahashi H."/>
            <person name="Saitta S."/>
            <person name="Budarf M.L."/>
            <person name="McDermid H.E."/>
            <person name="Johnson A."/>
            <person name="Wong A.C.C."/>
            <person name="Morrow B.E."/>
            <person name="Edelmann L."/>
            <person name="Kim U.J."/>
            <person name="Shizuya H."/>
            <person name="Simon M.I."/>
            <person name="Dumanski J.P."/>
            <person name="Peyrard M."/>
            <person name="Kedra D."/>
            <person name="Seroussi E."/>
            <person name="Fransson I."/>
            <person name="Tapia I."/>
            <person name="Bruder C.E."/>
            <person name="O'Brien K.P."/>
            <person name="Wilkinson P."/>
            <person name="Bodenteich A."/>
            <person name="Hartman K."/>
            <person name="Hu X."/>
            <person name="Khan A.S."/>
            <person name="Lane L."/>
            <person name="Tilahun Y."/>
            <person name="Wright H."/>
        </authorList>
    </citation>
    <scope>NUCLEOTIDE SEQUENCE [LARGE SCALE GENOMIC DNA]</scope>
</reference>
<reference key="7">
    <citation type="journal article" date="2004" name="Genome Res.">
        <title>The status, quality, and expansion of the NIH full-length cDNA project: the Mammalian Gene Collection (MGC).</title>
        <authorList>
            <consortium name="The MGC Project Team"/>
        </authorList>
    </citation>
    <scope>NUCLEOTIDE SEQUENCE [LARGE SCALE MRNA] (ISOFORM 1)</scope>
</reference>
<reference key="8">
    <citation type="journal article" date="2010" name="Nature">
        <title>Purified human BRCA2 stimulates RAD51-mediated recombination.</title>
        <authorList>
            <person name="Jensen R.B."/>
            <person name="Carreira A."/>
            <person name="Kowalczykowski S.C."/>
        </authorList>
    </citation>
    <scope>INTERACTION WITH BRCA2</scope>
</reference>
<reference key="9">
    <citation type="journal article" date="2011" name="J. Biol. Chem.">
        <title>RAD51-associated protein 1 (RAD51AP1) interacts with the meiotic recombinase DMC1 through a conserved motif.</title>
        <authorList>
            <person name="Dunlop M.H."/>
            <person name="Dray E."/>
            <person name="Zhao W."/>
            <person name="Tsai M.S."/>
            <person name="Wiese C."/>
            <person name="Schild D."/>
            <person name="Sung P."/>
        </authorList>
    </citation>
    <scope>INTERACTION WITH RAD51AP1</scope>
</reference>
<reference key="10">
    <citation type="journal article" date="2011" name="Proc. Natl. Acad. Sci. U.S.A.">
        <title>Molecular basis for enhancement of the meiotic DMC1 recombinase by RAD51 associated protein 1 (RAD51AP1).</title>
        <authorList>
            <person name="Dray E."/>
            <person name="Dunlop M.H."/>
            <person name="Kauppi L."/>
            <person name="San Filippo J."/>
            <person name="Wiese C."/>
            <person name="Tsai M.S."/>
            <person name="Begovic S."/>
            <person name="Schild D."/>
            <person name="Jasin M."/>
            <person name="Keeney S."/>
            <person name="Sung P."/>
        </authorList>
    </citation>
    <scope>FUNCTION</scope>
    <scope>INTERACTION WITH RAD51AP1</scope>
</reference>
<reference key="11">
    <citation type="journal article" date="2019" name="J. Proteome Res.">
        <title>Cell Type-Specific Expression of Testis Elevated Genes Based on Transcriptomics and Antibody-Based Proteomics.</title>
        <authorList>
            <person name="Pineau C."/>
            <person name="Hikmet F."/>
            <person name="Zhang C."/>
            <person name="Oksvold P."/>
            <person name="Chen S."/>
            <person name="Fagerberg L."/>
            <person name="Uhlen M."/>
            <person name="Lindskog C."/>
        </authorList>
    </citation>
    <scope>SUBCELLULAR LOCATION</scope>
</reference>
<reference key="12">
    <citation type="journal article" date="2004" name="Mol. Cell">
        <title>Structural basis for octameric ring formation and DNA interaction of the human homologous-pairing protein Dmc1.</title>
        <authorList>
            <person name="Kinebuchi T."/>
            <person name="Kagawa W."/>
            <person name="Enomoto R."/>
            <person name="Tanaka K."/>
            <person name="Miyagawa K."/>
            <person name="Shibata T."/>
            <person name="Kurumizaka H."/>
            <person name="Yokoyama S."/>
        </authorList>
    </citation>
    <scope>X-RAY CRYSTALLOGRAPHY (3.2 ANGSTROMS)</scope>
    <scope>SUBUNIT</scope>
    <scope>DNA-BINDING SITES</scope>
    <scope>MUTAGENESIS OF ARG-230; PHE-233; ARG-236; ARG-242; GLU-258 AND ARG-311</scope>
</reference>
<sequence length="340" mass="37681">MKEDQVVAEEPGFQDEEESLFQDIDLLQKHGINVADIKKLKSVGICTIKGIQMTTRRALCNVKGLSEAKVDKIKEAANKLIEPGFLTAFEYSEKRKMVFHITTGSQEFDKLLGGGIESMAITEAFGEFRTGKTQLSHTLCVTAQLPGAGGYPGGKIIFIDTENTFRPDRLRDIADRFNVDHDAVLDNVLYARAYTSEHQMELLDYVAAKFHEEAGIFKLLIIDSIMALFRVDFSGRGELAERQQKLAQMLSRLQKISEEYNVAVFVTNQMTADPGATMTFQADPKKPIGGHILAHASTTRISLRKGRGELRIAKIYDSPEMPENEATFAITAGGIGDAKE</sequence>
<proteinExistence type="evidence at protein level"/>